<dbReference type="EC" id="3.9.1.-" evidence="1"/>
<dbReference type="EC" id="3.4.22.-" evidence="1"/>
<dbReference type="EMBL" id="U09405">
    <property type="protein sequence ID" value="AAA18396.1"/>
    <property type="molecule type" value="mRNA"/>
</dbReference>
<dbReference type="EMBL" id="BC102553">
    <property type="protein sequence ID" value="AAI02554.1"/>
    <property type="molecule type" value="mRNA"/>
</dbReference>
<dbReference type="PIR" id="A35350">
    <property type="entry name" value="A35350"/>
</dbReference>
<dbReference type="RefSeq" id="NP_787006.1">
    <property type="nucleotide sequence ID" value="NM_175812.2"/>
</dbReference>
<dbReference type="SMR" id="P62958"/>
<dbReference type="FunCoup" id="P62958">
    <property type="interactions" value="1653"/>
</dbReference>
<dbReference type="STRING" id="9913.ENSBTAP00000014552"/>
<dbReference type="iPTMnet" id="P62958"/>
<dbReference type="PaxDb" id="9913-ENSBTAP00000014552"/>
<dbReference type="PeptideAtlas" id="P62958"/>
<dbReference type="Ensembl" id="ENSBTAT00000014552.5">
    <property type="protein sequence ID" value="ENSBTAP00000014552.5"/>
    <property type="gene ID" value="ENSBTAG00000010959.5"/>
</dbReference>
<dbReference type="GeneID" id="327693"/>
<dbReference type="KEGG" id="bta:327693"/>
<dbReference type="CTD" id="3094"/>
<dbReference type="VGNC" id="VGNC:29854">
    <property type="gene designation" value="HINT1"/>
</dbReference>
<dbReference type="eggNOG" id="KOG3275">
    <property type="taxonomic scope" value="Eukaryota"/>
</dbReference>
<dbReference type="GeneTree" id="ENSGT00940000154451"/>
<dbReference type="HOGENOM" id="CLU_056776_8_1_1"/>
<dbReference type="InParanoid" id="P62958"/>
<dbReference type="OrthoDB" id="672793at2759"/>
<dbReference type="TreeFam" id="TF314862"/>
<dbReference type="Proteomes" id="UP000009136">
    <property type="component" value="Chromosome 7"/>
</dbReference>
<dbReference type="GO" id="GO:0005737">
    <property type="term" value="C:cytoplasm"/>
    <property type="evidence" value="ECO:0000250"/>
    <property type="project" value="UniProtKB"/>
</dbReference>
<dbReference type="GO" id="GO:0000118">
    <property type="term" value="C:histone deacetylase complex"/>
    <property type="evidence" value="ECO:0000250"/>
    <property type="project" value="UniProtKB"/>
</dbReference>
<dbReference type="GO" id="GO:0005634">
    <property type="term" value="C:nucleus"/>
    <property type="evidence" value="ECO:0000250"/>
    <property type="project" value="UniProtKB"/>
</dbReference>
<dbReference type="GO" id="GO:0043530">
    <property type="term" value="F:adenosine 5'-monophosphoramidase activity"/>
    <property type="evidence" value="ECO:0000250"/>
    <property type="project" value="UniProtKB"/>
</dbReference>
<dbReference type="GO" id="GO:0016929">
    <property type="term" value="F:deSUMOylase activity"/>
    <property type="evidence" value="ECO:0000250"/>
    <property type="project" value="UniProtKB"/>
</dbReference>
<dbReference type="GO" id="GO:0016787">
    <property type="term" value="F:hydrolase activity"/>
    <property type="evidence" value="ECO:0000250"/>
    <property type="project" value="UniProtKB"/>
</dbReference>
<dbReference type="GO" id="GO:0000166">
    <property type="term" value="F:nucleotide binding"/>
    <property type="evidence" value="ECO:0007669"/>
    <property type="project" value="UniProtKB-KW"/>
</dbReference>
<dbReference type="GO" id="GO:0072332">
    <property type="term" value="P:intrinsic apoptotic signaling pathway by p53 class mediator"/>
    <property type="evidence" value="ECO:0000250"/>
    <property type="project" value="UniProtKB"/>
</dbReference>
<dbReference type="GO" id="GO:0016926">
    <property type="term" value="P:protein desumoylation"/>
    <property type="evidence" value="ECO:0000250"/>
    <property type="project" value="UniProtKB"/>
</dbReference>
<dbReference type="GO" id="GO:0006508">
    <property type="term" value="P:proteolysis"/>
    <property type="evidence" value="ECO:0007669"/>
    <property type="project" value="UniProtKB-KW"/>
</dbReference>
<dbReference type="GO" id="GO:0009154">
    <property type="term" value="P:purine ribonucleotide catabolic process"/>
    <property type="evidence" value="ECO:0000250"/>
    <property type="project" value="UniProtKB"/>
</dbReference>
<dbReference type="GO" id="GO:0006355">
    <property type="term" value="P:regulation of DNA-templated transcription"/>
    <property type="evidence" value="ECO:0000250"/>
    <property type="project" value="UniProtKB"/>
</dbReference>
<dbReference type="CDD" id="cd01276">
    <property type="entry name" value="PKCI_related"/>
    <property type="match status" value="1"/>
</dbReference>
<dbReference type="FunFam" id="3.30.428.10:FF:000005">
    <property type="entry name" value="Histidine triad nucleotide-binding protein 1"/>
    <property type="match status" value="1"/>
</dbReference>
<dbReference type="Gene3D" id="3.30.428.10">
    <property type="entry name" value="HIT-like"/>
    <property type="match status" value="1"/>
</dbReference>
<dbReference type="InterPro" id="IPR019808">
    <property type="entry name" value="Histidine_triad_CS"/>
</dbReference>
<dbReference type="InterPro" id="IPR001310">
    <property type="entry name" value="Histidine_triad_HIT"/>
</dbReference>
<dbReference type="InterPro" id="IPR011146">
    <property type="entry name" value="HIT-like"/>
</dbReference>
<dbReference type="InterPro" id="IPR036265">
    <property type="entry name" value="HIT-like_sf"/>
</dbReference>
<dbReference type="PANTHER" id="PTHR23089">
    <property type="entry name" value="HISTIDINE TRIAD HIT PROTEIN"/>
    <property type="match status" value="1"/>
</dbReference>
<dbReference type="Pfam" id="PF01230">
    <property type="entry name" value="HIT"/>
    <property type="match status" value="1"/>
</dbReference>
<dbReference type="PRINTS" id="PR00332">
    <property type="entry name" value="HISTRIAD"/>
</dbReference>
<dbReference type="SUPFAM" id="SSF54197">
    <property type="entry name" value="HIT-like"/>
    <property type="match status" value="1"/>
</dbReference>
<dbReference type="PROSITE" id="PS00892">
    <property type="entry name" value="HIT_1"/>
    <property type="match status" value="1"/>
</dbReference>
<dbReference type="PROSITE" id="PS51084">
    <property type="entry name" value="HIT_2"/>
    <property type="match status" value="1"/>
</dbReference>
<keyword id="KW-0007">Acetylation</keyword>
<keyword id="KW-0053">Apoptosis</keyword>
<keyword id="KW-0963">Cytoplasm</keyword>
<keyword id="KW-0903">Direct protein sequencing</keyword>
<keyword id="KW-0378">Hydrolase</keyword>
<keyword id="KW-0547">Nucleotide-binding</keyword>
<keyword id="KW-0539">Nucleus</keyword>
<keyword id="KW-0597">Phosphoprotein</keyword>
<keyword id="KW-0645">Protease</keyword>
<keyword id="KW-1185">Reference proteome</keyword>
<keyword id="KW-0788">Thiol protease</keyword>
<keyword id="KW-0804">Transcription</keyword>
<keyword id="KW-0805">Transcription regulation</keyword>
<keyword id="KW-0833">Ubl conjugation pathway</keyword>
<evidence type="ECO:0000250" key="1">
    <source>
        <dbReference type="UniProtKB" id="P49773"/>
    </source>
</evidence>
<evidence type="ECO:0000250" key="2">
    <source>
        <dbReference type="UniProtKB" id="P70349"/>
    </source>
</evidence>
<evidence type="ECO:0000255" key="3">
    <source>
        <dbReference type="PROSITE-ProRule" id="PRU00464"/>
    </source>
</evidence>
<evidence type="ECO:0000269" key="4">
    <source>
    </source>
</evidence>
<evidence type="ECO:0000305" key="5"/>
<reference key="1">
    <citation type="submission" date="1994-05" db="EMBL/GenBank/DDBJ databases">
        <title>Cloning of a putative inhibitor of protein kinase C from several species.</title>
        <authorList>
            <person name="Waller S.J."/>
            <person name="Murphy D."/>
        </authorList>
    </citation>
    <scope>NUCLEOTIDE SEQUENCE [MRNA]</scope>
    <source>
        <tissue>Hypothalamus</tissue>
    </source>
</reference>
<reference key="2">
    <citation type="submission" date="2005-08" db="EMBL/GenBank/DDBJ databases">
        <authorList>
            <consortium name="NIH - Mammalian Gene Collection (MGC) project"/>
        </authorList>
    </citation>
    <scope>NUCLEOTIDE SEQUENCE [LARGE SCALE MRNA]</scope>
    <source>
        <strain>Hereford</strain>
        <tissue>Testis</tissue>
    </source>
</reference>
<reference key="3">
    <citation type="journal article" date="1990" name="J. Biol. Chem.">
        <title>Amino acid sequence and characterization of a protein inhibitor of protein kinase C.</title>
        <authorList>
            <person name="Pearson J.D."/>
            <person name="Dewald D.B."/>
            <person name="Mathews W.R."/>
            <person name="Mozier N.M."/>
            <person name="Zurcher-Neely H.A."/>
            <person name="Heinrikson R.L."/>
            <person name="Morris M.A."/>
            <person name="McCubbin W.D."/>
            <person name="McDonald J.R."/>
            <person name="Fraser E.D."/>
            <person name="Vogel H.J."/>
            <person name="Kay C.M."/>
            <person name="Walsh M.P."/>
        </authorList>
    </citation>
    <scope>PROTEIN SEQUENCE OF 2-126</scope>
    <scope>ACETYLATION AT ALA-2</scope>
</reference>
<reference key="4">
    <citation type="journal article" date="1991" name="FEBS Lett.">
        <title>Characterization of a novel zinc binding site of protein kinase C inhibitor-1.</title>
        <authorList>
            <person name="Mozier N.M."/>
            <person name="Walsh M.P."/>
            <person name="Pearson J.D."/>
        </authorList>
    </citation>
    <scope>PUTATIVE ZINC-BINDING DOMAIN</scope>
</reference>
<reference key="5">
    <citation type="journal article" date="1992" name="DNA Seq.">
        <title>The HIT protein family: a new family of proteins present in prokaryotes, yeast and mammals.</title>
        <authorList>
            <person name="Seraphin B."/>
        </authorList>
    </citation>
    <scope>SIMILARITY TO OTHER MEMBERS OF THE HIT FAMILY</scope>
</reference>
<gene>
    <name type="primary">HINT1</name>
    <name type="synonym">HINT</name>
    <name type="synonym">PKCI1</name>
</gene>
<comment type="function">
    <text evidence="1 2">Exhibits adenosine 5'-monophosphoramidase activity, hydrolyzing purine nucleotide phosphoramidates with a single phosphate group such as adenosine 5'monophosphoramidate (AMP-NH2) to yield AMP and NH2 (By similarity). Hydrolyzes adenosine 5'monophosphomorpholidate (AMP-morpholidate) and guanosine 5'monophosphomorpholidate (GMP-morpholidate) (By similarity). Hydrolyzes lysyl-AMP (AMP-N-epsilon-(N-alpha-acetyl lysine methyl ester)) generated by lysine tRNA ligase, as well as Met-AMP, His-AMP and Asp-AMP, lysyl-GMP (GMP-N-epsilon-(N-alpha-acetyl lysine methyl ester)) and AMP-N-alanine methyl ester (By similarity). Can also convert adenosine 5'-O-phosphorothioate and guanosine 5'-O-phosphorothioate to the corresponding nucleoside 5'-O-phosphates with concomitant release of hydrogen sulfide (By similarity). In addition, functions as a scaffolding protein that modulates transcriptional activation by the LEF1/TCF1-CTNNB1 complex and by the complex formed with MITF and CTNNB1 (By similarity). Modulates p53/TP53 levels and p53/TP53-mediated apoptosis. Modulates proteasomal degradation of target proteins by the SCF (SKP2-CUL1-F-box protein) E3 ubiquitin-protein ligase complex (By similarity). Also exhibits SUMO-specific isopeptidase activity, deconjugating SUMO1 from RANGAP1 and RGS17 (By similarity).</text>
</comment>
<comment type="catalytic activity">
    <reaction evidence="1">
        <text>adenosine 5'-phosphoramidate + H2O = AMP + NH4(+)</text>
        <dbReference type="Rhea" id="RHEA:67916"/>
        <dbReference type="ChEBI" id="CHEBI:15377"/>
        <dbReference type="ChEBI" id="CHEBI:28938"/>
        <dbReference type="ChEBI" id="CHEBI:57890"/>
        <dbReference type="ChEBI" id="CHEBI:456215"/>
    </reaction>
</comment>
<comment type="subunit">
    <text evidence="1 2">Homodimer (By similarity). Interacts with CDK7 (By similarity). Interacts with RUVBL1 and RUVBL2 and is associated with the LEF1/TCF1-CTNNB1 complex and with a KAT5 histone acetyltransferase complex (By similarity). Identified in a complex with MITF and CTNNB1 (By similarity). Interacts with CDC34 and RBX1, and is part of a SCF (SKP2-CUL1-F-box protein) E3 ubiquitin-protein ligase complex (By similarity). Interacts with SUMO1, SUMO2 and RGS17 (By similarity). Interacts with the Ten-1 ICD form of TENM1 (By similarity). Interacts with CALM1; interaction increases in the presence of calcium ions (By similarity).</text>
</comment>
<comment type="subcellular location">
    <subcellularLocation>
        <location evidence="1">Cytoplasm</location>
    </subcellularLocation>
    <subcellularLocation>
        <location evidence="1">Nucleus</location>
    </subcellularLocation>
</comment>
<comment type="tissue specificity">
    <text>Widely expressed.</text>
</comment>
<comment type="similarity">
    <text evidence="5">Belongs to the HINT family.</text>
</comment>
<comment type="caution">
    <text evidence="5">Was originally thought to be a protein kinase C inhibitor and to bind zinc in solution. Both seem to be incorrect.</text>
</comment>
<accession>P62958</accession>
<accession>P16436</accession>
<accession>Q3T060</accession>
<proteinExistence type="evidence at protein level"/>
<protein>
    <recommendedName>
        <fullName evidence="1">Adenosine 5'-monophosphoramidase HINT1</fullName>
        <ecNumber evidence="1">3.9.1.-</ecNumber>
    </recommendedName>
    <alternativeName>
        <fullName>17 kDa inhibitor of protein kinase C</fullName>
    </alternativeName>
    <alternativeName>
        <fullName evidence="1">Desumoylating isopeptidase HINT1</fullName>
        <ecNumber evidence="1">3.4.22.-</ecNumber>
    </alternativeName>
    <alternativeName>
        <fullName>Histidine triad nucleotide-binding protein 1</fullName>
    </alternativeName>
    <alternativeName>
        <fullName>Protein kinase C inhibitor 1</fullName>
    </alternativeName>
    <alternativeName>
        <fullName>Protein kinase C-interacting protein 1</fullName>
        <shortName>PKCI-1</shortName>
    </alternativeName>
</protein>
<sequence>MADEIAKAQVARPGGDTIFGKIIRKEIPAKIIYEDDQCLAFHDISPQAPTHFLVIPKKYISQISAAEDDDESLLGHLMIVGKKCAADLGLKKGYRMVVNEGSDGGQSVYHVHLHVLGGRQMNWPPG</sequence>
<feature type="initiator methionine" description="Removed" evidence="4">
    <location>
        <position position="1"/>
    </location>
</feature>
<feature type="chain" id="PRO_0000109780" description="Adenosine 5'-monophosphoramidase HINT1">
    <location>
        <begin position="2"/>
        <end position="126"/>
    </location>
</feature>
<feature type="domain" description="HIT" evidence="3">
    <location>
        <begin position="18"/>
        <end position="126"/>
    </location>
</feature>
<feature type="short sequence motif" description="Histidine triad motif">
    <location>
        <begin position="110"/>
        <end position="114"/>
    </location>
</feature>
<feature type="active site" description="Tele-AMP-histidine intermediate" evidence="1">
    <location>
        <position position="112"/>
    </location>
</feature>
<feature type="binding site" evidence="1">
    <location>
        <begin position="43"/>
        <end position="44"/>
    </location>
    <ligand>
        <name>AMP</name>
        <dbReference type="ChEBI" id="CHEBI:456215"/>
    </ligand>
</feature>
<feature type="binding site" evidence="1">
    <location>
        <position position="99"/>
    </location>
    <ligand>
        <name>AMP</name>
        <dbReference type="ChEBI" id="CHEBI:456215"/>
    </ligand>
</feature>
<feature type="binding site" evidence="1">
    <location>
        <begin position="105"/>
        <end position="107"/>
    </location>
    <ligand>
        <name>AMP</name>
        <dbReference type="ChEBI" id="CHEBI:456215"/>
    </ligand>
</feature>
<feature type="binding site" evidence="1">
    <location>
        <begin position="112"/>
        <end position="114"/>
    </location>
    <ligand>
        <name>AMP</name>
        <dbReference type="ChEBI" id="CHEBI:456215"/>
    </ligand>
</feature>
<feature type="modified residue" description="N-acetylalanine" evidence="4">
    <location>
        <position position="2"/>
    </location>
</feature>
<feature type="modified residue" description="N6-acetyllysine" evidence="1">
    <location>
        <position position="21"/>
    </location>
</feature>
<feature type="modified residue" description="N6-acetyllysine" evidence="1">
    <location>
        <position position="30"/>
    </location>
</feature>
<feature type="modified residue" description="Phosphoserine" evidence="2">
    <location>
        <position position="45"/>
    </location>
</feature>
<feature type="modified residue" description="Phosphoserine" evidence="2">
    <location>
        <position position="72"/>
    </location>
</feature>
<feature type="sequence conflict" description="In Ref. 2; AAA18396." evidence="5" ref="2">
    <original>Q</original>
    <variation>E</variation>
    <location>
        <position position="62"/>
    </location>
</feature>
<organism>
    <name type="scientific">Bos taurus</name>
    <name type="common">Bovine</name>
    <dbReference type="NCBI Taxonomy" id="9913"/>
    <lineage>
        <taxon>Eukaryota</taxon>
        <taxon>Metazoa</taxon>
        <taxon>Chordata</taxon>
        <taxon>Craniata</taxon>
        <taxon>Vertebrata</taxon>
        <taxon>Euteleostomi</taxon>
        <taxon>Mammalia</taxon>
        <taxon>Eutheria</taxon>
        <taxon>Laurasiatheria</taxon>
        <taxon>Artiodactyla</taxon>
        <taxon>Ruminantia</taxon>
        <taxon>Pecora</taxon>
        <taxon>Bovidae</taxon>
        <taxon>Bovinae</taxon>
        <taxon>Bos</taxon>
    </lineage>
</organism>
<name>HINT1_BOVIN</name>